<protein>
    <recommendedName>
        <fullName evidence="1">Large ribosomal subunit protein bL32</fullName>
    </recommendedName>
    <alternativeName>
        <fullName evidence="2">50S ribosomal protein L32</fullName>
    </alternativeName>
</protein>
<evidence type="ECO:0000255" key="1">
    <source>
        <dbReference type="HAMAP-Rule" id="MF_00340"/>
    </source>
</evidence>
<evidence type="ECO:0000305" key="2"/>
<feature type="chain" id="PRO_0000277970" description="Large ribosomal subunit protein bL32">
    <location>
        <begin position="1"/>
        <end position="66"/>
    </location>
</feature>
<name>RL32_RICBR</name>
<comment type="similarity">
    <text evidence="1">Belongs to the bacterial ribosomal protein bL32 family.</text>
</comment>
<keyword id="KW-0687">Ribonucleoprotein</keyword>
<keyword id="KW-0689">Ribosomal protein</keyword>
<dbReference type="EMBL" id="CP000087">
    <property type="protein sequence ID" value="ABE04208.1"/>
    <property type="molecule type" value="Genomic_DNA"/>
</dbReference>
<dbReference type="RefSeq" id="WP_011476823.1">
    <property type="nucleotide sequence ID" value="NC_007940.1"/>
</dbReference>
<dbReference type="SMR" id="Q1RKA6"/>
<dbReference type="KEGG" id="rbe:RBE_0127"/>
<dbReference type="eggNOG" id="COG0333">
    <property type="taxonomic scope" value="Bacteria"/>
</dbReference>
<dbReference type="HOGENOM" id="CLU_129084_2_0_5"/>
<dbReference type="OrthoDB" id="9801927at2"/>
<dbReference type="Proteomes" id="UP000001951">
    <property type="component" value="Chromosome"/>
</dbReference>
<dbReference type="GO" id="GO:0015934">
    <property type="term" value="C:large ribosomal subunit"/>
    <property type="evidence" value="ECO:0007669"/>
    <property type="project" value="InterPro"/>
</dbReference>
<dbReference type="GO" id="GO:0003735">
    <property type="term" value="F:structural constituent of ribosome"/>
    <property type="evidence" value="ECO:0007669"/>
    <property type="project" value="InterPro"/>
</dbReference>
<dbReference type="GO" id="GO:0006412">
    <property type="term" value="P:translation"/>
    <property type="evidence" value="ECO:0007669"/>
    <property type="project" value="UniProtKB-UniRule"/>
</dbReference>
<dbReference type="Gene3D" id="1.20.5.640">
    <property type="entry name" value="Single helix bin"/>
    <property type="match status" value="1"/>
</dbReference>
<dbReference type="HAMAP" id="MF_00340">
    <property type="entry name" value="Ribosomal_bL32"/>
    <property type="match status" value="1"/>
</dbReference>
<dbReference type="InterPro" id="IPR002677">
    <property type="entry name" value="Ribosomal_bL32"/>
</dbReference>
<dbReference type="InterPro" id="IPR044957">
    <property type="entry name" value="Ribosomal_bL32_bact"/>
</dbReference>
<dbReference type="InterPro" id="IPR011332">
    <property type="entry name" value="Ribosomal_zn-bd"/>
</dbReference>
<dbReference type="NCBIfam" id="TIGR01031">
    <property type="entry name" value="rpmF_bact"/>
    <property type="match status" value="1"/>
</dbReference>
<dbReference type="PANTHER" id="PTHR35534">
    <property type="entry name" value="50S RIBOSOMAL PROTEIN L32"/>
    <property type="match status" value="1"/>
</dbReference>
<dbReference type="PANTHER" id="PTHR35534:SF1">
    <property type="entry name" value="LARGE RIBOSOMAL SUBUNIT PROTEIN BL32"/>
    <property type="match status" value="1"/>
</dbReference>
<dbReference type="Pfam" id="PF01783">
    <property type="entry name" value="Ribosomal_L32p"/>
    <property type="match status" value="1"/>
</dbReference>
<dbReference type="SUPFAM" id="SSF57829">
    <property type="entry name" value="Zn-binding ribosomal proteins"/>
    <property type="match status" value="1"/>
</dbReference>
<accession>Q1RKA6</accession>
<organism>
    <name type="scientific">Rickettsia bellii (strain RML369-C)</name>
    <dbReference type="NCBI Taxonomy" id="336407"/>
    <lineage>
        <taxon>Bacteria</taxon>
        <taxon>Pseudomonadati</taxon>
        <taxon>Pseudomonadota</taxon>
        <taxon>Alphaproteobacteria</taxon>
        <taxon>Rickettsiales</taxon>
        <taxon>Rickettsiaceae</taxon>
        <taxon>Rickettsieae</taxon>
        <taxon>Rickettsia</taxon>
        <taxon>belli group</taxon>
    </lineage>
</organism>
<reference key="1">
    <citation type="journal article" date="2006" name="PLoS Genet.">
        <title>Genome sequence of Rickettsia bellii illuminates the role of amoebae in gene exchanges between intracellular pathogens.</title>
        <authorList>
            <person name="Ogata H."/>
            <person name="La Scola B."/>
            <person name="Audic S."/>
            <person name="Renesto P."/>
            <person name="Blanc G."/>
            <person name="Robert C."/>
            <person name="Fournier P.-E."/>
            <person name="Claverie J.-M."/>
            <person name="Raoult D."/>
        </authorList>
    </citation>
    <scope>NUCLEOTIDE SEQUENCE [LARGE SCALE GENOMIC DNA]</scope>
    <source>
        <strain>RML369-C</strain>
    </source>
</reference>
<sequence>MAVPKKKTSKSRRNMRRSHLALGKVNVIVDSQTGEYKLPHHVSLIDGTYNNRQVVTKKIETEEEVA</sequence>
<gene>
    <name evidence="1" type="primary">rpmF</name>
    <name type="ordered locus">RBE_0127</name>
</gene>
<proteinExistence type="inferred from homology"/>